<name>APE1_SACS2</name>
<organism>
    <name type="scientific">Saccharolobus solfataricus (strain ATCC 35092 / DSM 1617 / JCM 11322 / P2)</name>
    <name type="common">Sulfolobus solfataricus</name>
    <dbReference type="NCBI Taxonomy" id="273057"/>
    <lineage>
        <taxon>Archaea</taxon>
        <taxon>Thermoproteota</taxon>
        <taxon>Thermoprotei</taxon>
        <taxon>Sulfolobales</taxon>
        <taxon>Sulfolobaceae</taxon>
        <taxon>Saccharolobus</taxon>
    </lineage>
</organism>
<comment type="cofactor">
    <cofactor evidence="1">
        <name>Zn(2+)</name>
        <dbReference type="ChEBI" id="CHEBI:29105"/>
    </cofactor>
    <text evidence="1">Binds 1 zinc ion per subunit.</text>
</comment>
<comment type="subcellular location">
    <subcellularLocation>
        <location evidence="3">Cytoplasm</location>
    </subcellularLocation>
</comment>
<comment type="similarity">
    <text evidence="3">Belongs to the peptidase M1 family.</text>
</comment>
<sequence>MPNIEKYEIFLDFNGNEYEGVEKIYLNSEEEKLELDSVNLEIRSVKSDGKDTKFELKGEKLVIYGKIERELEIKFKGKASRDSILGIYVAPYDGKGMITTQFEAVYARRFIPCFDHPAMKARFKLSVRVQKGLKVISNMPVERIEEDVDGKVIYRFQETPKMSTYLLYLGIDEFEEISDNSKQPTVILATVPGKSKRGLFAINVARKVIEFYEKYFEIPYQLPKVHLIQVPEFAAGAMENWGAITFRETALLADDSSSISQKFRVAEVVAHELAHQWFGNLVTLKWWDDLWLNESFATFMSYKSIKHLFPQWDSEGHLIYDESIGALEDDSLSTTHPIEAHVKDPHEIEQMFDNISYGKGASILKMIEAYVGEENFRRGVVNYLNSFKFGNAEGKDLWNSISNAAGQSIGEIMADWITKPGYPVIFVNAYGNSIRFSQKRFTLLDSGLNEVYKVPITYEINDKFGTLLLDKESAEIRLDEGLKSIKVNINRTGFYRVLYDSLNLAFSSKLNAYEELGLVNDYWNFLLADLIDAKTYFGVIGRFVYTSNSFVSREITSQLLTLYYLFKKNYGKDFLVNQVKIFRKANDDLGKLAYSTVISALARMDEEFALGLSTLFDQYENIDSNIKEAVAIAYAVTNNDFNTLLEKYKRYTIDEEKNRILSAISSLRDPSIVVKVFSLIFERNIKAQDTRFVISSLLHNPHIREEVCSYLMNNFEEVKKFVNTVYGGPWGLGSIVRSMSFCGVDKPKDIIDFLEKVKFKEIERPIKESEERIKVYSRLKQNLP</sequence>
<feature type="chain" id="PRO_0000095106" description="Probable aminopeptidase 1">
    <location>
        <begin position="1"/>
        <end position="784"/>
    </location>
</feature>
<feature type="active site" description="Proton acceptor" evidence="2">
    <location>
        <position position="272"/>
    </location>
</feature>
<feature type="binding site" evidence="1">
    <location>
        <position position="103"/>
    </location>
    <ligand>
        <name>substrate</name>
    </ligand>
</feature>
<feature type="binding site" evidence="1">
    <location>
        <begin position="236"/>
        <end position="240"/>
    </location>
    <ligand>
        <name>substrate</name>
    </ligand>
</feature>
<feature type="binding site" evidence="2">
    <location>
        <position position="271"/>
    </location>
    <ligand>
        <name>Zn(2+)</name>
        <dbReference type="ChEBI" id="CHEBI:29105"/>
        <note>catalytic</note>
    </ligand>
</feature>
<feature type="binding site" evidence="2">
    <location>
        <position position="275"/>
    </location>
    <ligand>
        <name>Zn(2+)</name>
        <dbReference type="ChEBI" id="CHEBI:29105"/>
        <note>catalytic</note>
    </ligand>
</feature>
<feature type="binding site" evidence="2">
    <location>
        <position position="294"/>
    </location>
    <ligand>
        <name>Zn(2+)</name>
        <dbReference type="ChEBI" id="CHEBI:29105"/>
        <note>catalytic</note>
    </ligand>
</feature>
<feature type="site" description="Transition state stabilizer" evidence="1">
    <location>
        <position position="357"/>
    </location>
</feature>
<dbReference type="EC" id="3.4.11.-"/>
<dbReference type="EMBL" id="AE006641">
    <property type="protein sequence ID" value="AAK42793.1"/>
    <property type="molecule type" value="Genomic_DNA"/>
</dbReference>
<dbReference type="PIR" id="B90442">
    <property type="entry name" value="B90442"/>
</dbReference>
<dbReference type="RefSeq" id="WP_009988593.1">
    <property type="nucleotide sequence ID" value="NC_002754.1"/>
</dbReference>
<dbReference type="SMR" id="Q97VF1"/>
<dbReference type="FunCoup" id="Q97VF1">
    <property type="interactions" value="170"/>
</dbReference>
<dbReference type="STRING" id="273057.SSO2675"/>
<dbReference type="MEROPS" id="M01.021"/>
<dbReference type="PaxDb" id="273057-SSO2675"/>
<dbReference type="EnsemblBacteria" id="AAK42793">
    <property type="protein sequence ID" value="AAK42793"/>
    <property type="gene ID" value="SSO2675"/>
</dbReference>
<dbReference type="KEGG" id="sso:SSO2675"/>
<dbReference type="PATRIC" id="fig|273057.12.peg.2757"/>
<dbReference type="eggNOG" id="arCOG02969">
    <property type="taxonomic scope" value="Archaea"/>
</dbReference>
<dbReference type="HOGENOM" id="CLU_003705_0_3_2"/>
<dbReference type="InParanoid" id="Q97VF1"/>
<dbReference type="PhylomeDB" id="Q97VF1"/>
<dbReference type="Proteomes" id="UP000001974">
    <property type="component" value="Chromosome"/>
</dbReference>
<dbReference type="GO" id="GO:0005737">
    <property type="term" value="C:cytoplasm"/>
    <property type="evidence" value="ECO:0000318"/>
    <property type="project" value="GO_Central"/>
</dbReference>
<dbReference type="GO" id="GO:0005615">
    <property type="term" value="C:extracellular space"/>
    <property type="evidence" value="ECO:0000318"/>
    <property type="project" value="GO_Central"/>
</dbReference>
<dbReference type="GO" id="GO:0016020">
    <property type="term" value="C:membrane"/>
    <property type="evidence" value="ECO:0000318"/>
    <property type="project" value="GO_Central"/>
</dbReference>
<dbReference type="GO" id="GO:0070006">
    <property type="term" value="F:metalloaminopeptidase activity"/>
    <property type="evidence" value="ECO:0000318"/>
    <property type="project" value="GO_Central"/>
</dbReference>
<dbReference type="GO" id="GO:0042277">
    <property type="term" value="F:peptide binding"/>
    <property type="evidence" value="ECO:0000318"/>
    <property type="project" value="GO_Central"/>
</dbReference>
<dbReference type="GO" id="GO:0008270">
    <property type="term" value="F:zinc ion binding"/>
    <property type="evidence" value="ECO:0000318"/>
    <property type="project" value="GO_Central"/>
</dbReference>
<dbReference type="GO" id="GO:0043171">
    <property type="term" value="P:peptide catabolic process"/>
    <property type="evidence" value="ECO:0000318"/>
    <property type="project" value="GO_Central"/>
</dbReference>
<dbReference type="GO" id="GO:0006508">
    <property type="term" value="P:proteolysis"/>
    <property type="evidence" value="ECO:0000318"/>
    <property type="project" value="GO_Central"/>
</dbReference>
<dbReference type="CDD" id="cd09601">
    <property type="entry name" value="M1_APN-Q_like"/>
    <property type="match status" value="1"/>
</dbReference>
<dbReference type="FunFam" id="2.60.40.1910:FF:000012">
    <property type="entry name" value="Aminopeptidase"/>
    <property type="match status" value="1"/>
</dbReference>
<dbReference type="FunFam" id="1.10.390.10:FF:000006">
    <property type="entry name" value="Puromycin-sensitive aminopeptidase"/>
    <property type="match status" value="1"/>
</dbReference>
<dbReference type="Gene3D" id="1.25.50.20">
    <property type="match status" value="1"/>
</dbReference>
<dbReference type="Gene3D" id="2.60.40.1910">
    <property type="match status" value="1"/>
</dbReference>
<dbReference type="Gene3D" id="1.10.390.10">
    <property type="entry name" value="Neutral Protease Domain 2"/>
    <property type="match status" value="1"/>
</dbReference>
<dbReference type="Gene3D" id="2.60.40.1730">
    <property type="entry name" value="tricorn interacting facor f3 domain"/>
    <property type="match status" value="1"/>
</dbReference>
<dbReference type="InterPro" id="IPR045357">
    <property type="entry name" value="Aminopeptidase_N-like_N"/>
</dbReference>
<dbReference type="InterPro" id="IPR042097">
    <property type="entry name" value="Aminopeptidase_N-like_N_sf"/>
</dbReference>
<dbReference type="InterPro" id="IPR024571">
    <property type="entry name" value="ERAP1-like_C_dom"/>
</dbReference>
<dbReference type="InterPro" id="IPR034016">
    <property type="entry name" value="M1_APN-typ"/>
</dbReference>
<dbReference type="InterPro" id="IPR001930">
    <property type="entry name" value="Peptidase_M1"/>
</dbReference>
<dbReference type="InterPro" id="IPR050344">
    <property type="entry name" value="Peptidase_M1_aminopeptidases"/>
</dbReference>
<dbReference type="InterPro" id="IPR014782">
    <property type="entry name" value="Peptidase_M1_dom"/>
</dbReference>
<dbReference type="InterPro" id="IPR027268">
    <property type="entry name" value="Peptidase_M4/M1_CTD_sf"/>
</dbReference>
<dbReference type="PANTHER" id="PTHR11533">
    <property type="entry name" value="PROTEASE M1 ZINC METALLOPROTEASE"/>
    <property type="match status" value="1"/>
</dbReference>
<dbReference type="PANTHER" id="PTHR11533:SF174">
    <property type="entry name" value="PUROMYCIN-SENSITIVE AMINOPEPTIDASE-RELATED"/>
    <property type="match status" value="1"/>
</dbReference>
<dbReference type="Pfam" id="PF11838">
    <property type="entry name" value="ERAP1_C"/>
    <property type="match status" value="1"/>
</dbReference>
<dbReference type="Pfam" id="PF01433">
    <property type="entry name" value="Peptidase_M1"/>
    <property type="match status" value="1"/>
</dbReference>
<dbReference type="Pfam" id="PF17900">
    <property type="entry name" value="Peptidase_M1_N"/>
    <property type="match status" value="1"/>
</dbReference>
<dbReference type="PRINTS" id="PR00756">
    <property type="entry name" value="ALADIPTASE"/>
</dbReference>
<dbReference type="SUPFAM" id="SSF63737">
    <property type="entry name" value="Leukotriene A4 hydrolase N-terminal domain"/>
    <property type="match status" value="1"/>
</dbReference>
<dbReference type="SUPFAM" id="SSF55486">
    <property type="entry name" value="Metalloproteases ('zincins'), catalytic domain"/>
    <property type="match status" value="1"/>
</dbReference>
<dbReference type="PROSITE" id="PS00142">
    <property type="entry name" value="ZINC_PROTEASE"/>
    <property type="match status" value="1"/>
</dbReference>
<gene>
    <name type="primary">ape1</name>
    <name type="ordered locus">SSO2675</name>
    <name type="ORF">C30_037</name>
</gene>
<protein>
    <recommendedName>
        <fullName>Probable aminopeptidase 1</fullName>
        <ecNumber>3.4.11.-</ecNumber>
    </recommendedName>
</protein>
<keyword id="KW-0031">Aminopeptidase</keyword>
<keyword id="KW-0963">Cytoplasm</keyword>
<keyword id="KW-0378">Hydrolase</keyword>
<keyword id="KW-0479">Metal-binding</keyword>
<keyword id="KW-0482">Metalloprotease</keyword>
<keyword id="KW-0645">Protease</keyword>
<keyword id="KW-1185">Reference proteome</keyword>
<keyword id="KW-0862">Zinc</keyword>
<accession>Q97VF1</accession>
<evidence type="ECO:0000250" key="1"/>
<evidence type="ECO:0000255" key="2">
    <source>
        <dbReference type="PROSITE-ProRule" id="PRU10095"/>
    </source>
</evidence>
<evidence type="ECO:0000305" key="3"/>
<proteinExistence type="inferred from homology"/>
<reference key="1">
    <citation type="journal article" date="2001" name="Proc. Natl. Acad. Sci. U.S.A.">
        <title>The complete genome of the crenarchaeon Sulfolobus solfataricus P2.</title>
        <authorList>
            <person name="She Q."/>
            <person name="Singh R.K."/>
            <person name="Confalonieri F."/>
            <person name="Zivanovic Y."/>
            <person name="Allard G."/>
            <person name="Awayez M.J."/>
            <person name="Chan-Weiher C.C.-Y."/>
            <person name="Clausen I.G."/>
            <person name="Curtis B.A."/>
            <person name="De Moors A."/>
            <person name="Erauso G."/>
            <person name="Fletcher C."/>
            <person name="Gordon P.M.K."/>
            <person name="Heikamp-de Jong I."/>
            <person name="Jeffries A.C."/>
            <person name="Kozera C.J."/>
            <person name="Medina N."/>
            <person name="Peng X."/>
            <person name="Thi-Ngoc H.P."/>
            <person name="Redder P."/>
            <person name="Schenk M.E."/>
            <person name="Theriault C."/>
            <person name="Tolstrup N."/>
            <person name="Charlebois R.L."/>
            <person name="Doolittle W.F."/>
            <person name="Duguet M."/>
            <person name="Gaasterland T."/>
            <person name="Garrett R.A."/>
            <person name="Ragan M.A."/>
            <person name="Sensen C.W."/>
            <person name="Van der Oost J."/>
        </authorList>
    </citation>
    <scope>NUCLEOTIDE SEQUENCE [LARGE SCALE GENOMIC DNA]</scope>
    <source>
        <strain>ATCC 35092 / DSM 1617 / JCM 11322 / P2</strain>
    </source>
</reference>